<keyword id="KW-0067">ATP-binding</keyword>
<keyword id="KW-0347">Helicase</keyword>
<keyword id="KW-0378">Hydrolase</keyword>
<keyword id="KW-0547">Nucleotide-binding</keyword>
<keyword id="KW-0539">Nucleus</keyword>
<keyword id="KW-1185">Reference proteome</keyword>
<keyword id="KW-0690">Ribosome biogenesis</keyword>
<keyword id="KW-0694">RNA-binding</keyword>
<keyword id="KW-0698">rRNA processing</keyword>
<evidence type="ECO:0000250" key="1"/>
<evidence type="ECO:0000255" key="2">
    <source>
        <dbReference type="PROSITE-ProRule" id="PRU00541"/>
    </source>
</evidence>
<evidence type="ECO:0000255" key="3">
    <source>
        <dbReference type="PROSITE-ProRule" id="PRU00542"/>
    </source>
</evidence>
<evidence type="ECO:0000256" key="4">
    <source>
        <dbReference type="SAM" id="MobiDB-lite"/>
    </source>
</evidence>
<evidence type="ECO:0000305" key="5"/>
<dbReference type="EC" id="3.6.4.13"/>
<dbReference type="EMBL" id="AAFI02000218">
    <property type="protein sequence ID" value="EAL60682.1"/>
    <property type="molecule type" value="Genomic_DNA"/>
</dbReference>
<dbReference type="RefSeq" id="XP_629093.1">
    <property type="nucleotide sequence ID" value="XM_629091.1"/>
</dbReference>
<dbReference type="SMR" id="Q54BD6"/>
<dbReference type="FunCoup" id="Q54BD6">
    <property type="interactions" value="1131"/>
</dbReference>
<dbReference type="STRING" id="44689.Q54BD6"/>
<dbReference type="PaxDb" id="44689-DDB0234210"/>
<dbReference type="EnsemblProtists" id="EAL60682">
    <property type="protein sequence ID" value="EAL60682"/>
    <property type="gene ID" value="DDB_G0293740"/>
</dbReference>
<dbReference type="GeneID" id="8629386"/>
<dbReference type="KEGG" id="ddi:DDB_G0293740"/>
<dbReference type="dictyBase" id="DDB_G0293740">
    <property type="gene designation" value="ddx51"/>
</dbReference>
<dbReference type="VEuPathDB" id="AmoebaDB:DDB_G0293740"/>
<dbReference type="eggNOG" id="KOG0350">
    <property type="taxonomic scope" value="Eukaryota"/>
</dbReference>
<dbReference type="HOGENOM" id="CLU_003041_15_3_1"/>
<dbReference type="InParanoid" id="Q54BD6"/>
<dbReference type="OMA" id="HEVKAFD"/>
<dbReference type="PhylomeDB" id="Q54BD6"/>
<dbReference type="PRO" id="PR:Q54BD6"/>
<dbReference type="Proteomes" id="UP000002195">
    <property type="component" value="Chromosome 6"/>
</dbReference>
<dbReference type="GO" id="GO:0005730">
    <property type="term" value="C:nucleolus"/>
    <property type="evidence" value="ECO:0007669"/>
    <property type="project" value="UniProtKB-SubCell"/>
</dbReference>
<dbReference type="GO" id="GO:0005634">
    <property type="term" value="C:nucleus"/>
    <property type="evidence" value="ECO:0000318"/>
    <property type="project" value="GO_Central"/>
</dbReference>
<dbReference type="GO" id="GO:0005524">
    <property type="term" value="F:ATP binding"/>
    <property type="evidence" value="ECO:0007669"/>
    <property type="project" value="UniProtKB-KW"/>
</dbReference>
<dbReference type="GO" id="GO:0016887">
    <property type="term" value="F:ATP hydrolysis activity"/>
    <property type="evidence" value="ECO:0007669"/>
    <property type="project" value="RHEA"/>
</dbReference>
<dbReference type="GO" id="GO:0003723">
    <property type="term" value="F:RNA binding"/>
    <property type="evidence" value="ECO:0007669"/>
    <property type="project" value="UniProtKB-KW"/>
</dbReference>
<dbReference type="GO" id="GO:0003724">
    <property type="term" value="F:RNA helicase activity"/>
    <property type="evidence" value="ECO:0007669"/>
    <property type="project" value="UniProtKB-EC"/>
</dbReference>
<dbReference type="GO" id="GO:0006364">
    <property type="term" value="P:rRNA processing"/>
    <property type="evidence" value="ECO:0007669"/>
    <property type="project" value="UniProtKB-KW"/>
</dbReference>
<dbReference type="CDD" id="cd17956">
    <property type="entry name" value="DEADc_DDX51"/>
    <property type="match status" value="1"/>
</dbReference>
<dbReference type="CDD" id="cd18787">
    <property type="entry name" value="SF2_C_DEAD"/>
    <property type="match status" value="1"/>
</dbReference>
<dbReference type="Gene3D" id="3.40.50.300">
    <property type="entry name" value="P-loop containing nucleotide triphosphate hydrolases"/>
    <property type="match status" value="2"/>
</dbReference>
<dbReference type="InterPro" id="IPR011545">
    <property type="entry name" value="DEAD/DEAH_box_helicase_dom"/>
</dbReference>
<dbReference type="InterPro" id="IPR014001">
    <property type="entry name" value="Helicase_ATP-bd"/>
</dbReference>
<dbReference type="InterPro" id="IPR001650">
    <property type="entry name" value="Helicase_C-like"/>
</dbReference>
<dbReference type="InterPro" id="IPR027417">
    <property type="entry name" value="P-loop_NTPase"/>
</dbReference>
<dbReference type="InterPro" id="IPR000629">
    <property type="entry name" value="RNA-helicase_DEAD-box_CS"/>
</dbReference>
<dbReference type="PANTHER" id="PTHR24031">
    <property type="entry name" value="RNA HELICASE"/>
    <property type="match status" value="1"/>
</dbReference>
<dbReference type="Pfam" id="PF00270">
    <property type="entry name" value="DEAD"/>
    <property type="match status" value="1"/>
</dbReference>
<dbReference type="Pfam" id="PF00271">
    <property type="entry name" value="Helicase_C"/>
    <property type="match status" value="1"/>
</dbReference>
<dbReference type="SMART" id="SM00487">
    <property type="entry name" value="DEXDc"/>
    <property type="match status" value="1"/>
</dbReference>
<dbReference type="SMART" id="SM00490">
    <property type="entry name" value="HELICc"/>
    <property type="match status" value="1"/>
</dbReference>
<dbReference type="SUPFAM" id="SSF52540">
    <property type="entry name" value="P-loop containing nucleoside triphosphate hydrolases"/>
    <property type="match status" value="1"/>
</dbReference>
<dbReference type="PROSITE" id="PS00039">
    <property type="entry name" value="DEAD_ATP_HELICASE"/>
    <property type="match status" value="1"/>
</dbReference>
<dbReference type="PROSITE" id="PS51192">
    <property type="entry name" value="HELICASE_ATP_BIND_1"/>
    <property type="match status" value="1"/>
</dbReference>
<dbReference type="PROSITE" id="PS51194">
    <property type="entry name" value="HELICASE_CTER"/>
    <property type="match status" value="1"/>
</dbReference>
<dbReference type="PROSITE" id="PS51195">
    <property type="entry name" value="Q_MOTIF"/>
    <property type="match status" value="1"/>
</dbReference>
<protein>
    <recommendedName>
        <fullName>Probable ATP-dependent RNA helicase ddx51</fullName>
        <ecNumber>3.6.4.13</ecNumber>
    </recommendedName>
    <alternativeName>
        <fullName>DEAD box protein 51</fullName>
    </alternativeName>
</protein>
<reference key="1">
    <citation type="journal article" date="2005" name="Nature">
        <title>The genome of the social amoeba Dictyostelium discoideum.</title>
        <authorList>
            <person name="Eichinger L."/>
            <person name="Pachebat J.A."/>
            <person name="Gloeckner G."/>
            <person name="Rajandream M.A."/>
            <person name="Sucgang R."/>
            <person name="Berriman M."/>
            <person name="Song J."/>
            <person name="Olsen R."/>
            <person name="Szafranski K."/>
            <person name="Xu Q."/>
            <person name="Tunggal B."/>
            <person name="Kummerfeld S."/>
            <person name="Madera M."/>
            <person name="Konfortov B.A."/>
            <person name="Rivero F."/>
            <person name="Bankier A.T."/>
            <person name="Lehmann R."/>
            <person name="Hamlin N."/>
            <person name="Davies R."/>
            <person name="Gaudet P."/>
            <person name="Fey P."/>
            <person name="Pilcher K."/>
            <person name="Chen G."/>
            <person name="Saunders D."/>
            <person name="Sodergren E.J."/>
            <person name="Davis P."/>
            <person name="Kerhornou A."/>
            <person name="Nie X."/>
            <person name="Hall N."/>
            <person name="Anjard C."/>
            <person name="Hemphill L."/>
            <person name="Bason N."/>
            <person name="Farbrother P."/>
            <person name="Desany B."/>
            <person name="Just E."/>
            <person name="Morio T."/>
            <person name="Rost R."/>
            <person name="Churcher C.M."/>
            <person name="Cooper J."/>
            <person name="Haydock S."/>
            <person name="van Driessche N."/>
            <person name="Cronin A."/>
            <person name="Goodhead I."/>
            <person name="Muzny D.M."/>
            <person name="Mourier T."/>
            <person name="Pain A."/>
            <person name="Lu M."/>
            <person name="Harper D."/>
            <person name="Lindsay R."/>
            <person name="Hauser H."/>
            <person name="James K.D."/>
            <person name="Quiles M."/>
            <person name="Madan Babu M."/>
            <person name="Saito T."/>
            <person name="Buchrieser C."/>
            <person name="Wardroper A."/>
            <person name="Felder M."/>
            <person name="Thangavelu M."/>
            <person name="Johnson D."/>
            <person name="Knights A."/>
            <person name="Loulseged H."/>
            <person name="Mungall K.L."/>
            <person name="Oliver K."/>
            <person name="Price C."/>
            <person name="Quail M.A."/>
            <person name="Urushihara H."/>
            <person name="Hernandez J."/>
            <person name="Rabbinowitsch E."/>
            <person name="Steffen D."/>
            <person name="Sanders M."/>
            <person name="Ma J."/>
            <person name="Kohara Y."/>
            <person name="Sharp S."/>
            <person name="Simmonds M.N."/>
            <person name="Spiegler S."/>
            <person name="Tivey A."/>
            <person name="Sugano S."/>
            <person name="White B."/>
            <person name="Walker D."/>
            <person name="Woodward J.R."/>
            <person name="Winckler T."/>
            <person name="Tanaka Y."/>
            <person name="Shaulsky G."/>
            <person name="Schleicher M."/>
            <person name="Weinstock G.M."/>
            <person name="Rosenthal A."/>
            <person name="Cox E.C."/>
            <person name="Chisholm R.L."/>
            <person name="Gibbs R.A."/>
            <person name="Loomis W.F."/>
            <person name="Platzer M."/>
            <person name="Kay R.R."/>
            <person name="Williams J.G."/>
            <person name="Dear P.H."/>
            <person name="Noegel A.A."/>
            <person name="Barrell B.G."/>
            <person name="Kuspa A."/>
        </authorList>
    </citation>
    <scope>NUCLEOTIDE SEQUENCE [LARGE SCALE GENOMIC DNA]</scope>
    <source>
        <strain>AX4</strain>
    </source>
</reference>
<accession>Q54BD6</accession>
<sequence>MTTINYNENINNNNNTLESFGIEEWLINNLKEQSIINLFPVQQEIVPFINRTEGHDICVCAPTGSGKTLAYAIPLVQKIVKRVVRRVRVAVIVPTHDLVIQVEKTFQSIIKGTDLVVLSLGVKPFHIEQKLLIKNHSYGEHALYESLVDIIVSTPGRIVDHINETLGFTLKYLNYLVIDEADRLLRQSFQDWLEIVIDSTNQHSDLNQQQEEQLIKYNSKGDIELFEKSISLKDNNNQMNHLCWSEFKLVKLLLSATMTYNPSKISLLQLNAPLFFTTSKTKEIKYSMPSTLKECYIISNGDQKPLVLLNIIYESLLKNNANGENKKKIICFTKSVDITHRLNTLLKLIGQVDKLKFTCEEYSSSLSTVERADLLSRFKLNQIDILICSDIMSRGMDIQDIDVVINYNTPPNITLYVHRVGRTARAGNFGVSYTIVDKSEIKYYISMMKKAERSQTLHCLKWKPNVYEKFQSSYKLGLNQMRLIYSKRKINDIGDNGDDNNDNNNEDGNEIDGSVENIENNNNNNNNNNKNNNNNNFEKDYEVKLKHSLLEISKKKAKINFNI</sequence>
<organism>
    <name type="scientific">Dictyostelium discoideum</name>
    <name type="common">Social amoeba</name>
    <dbReference type="NCBI Taxonomy" id="44689"/>
    <lineage>
        <taxon>Eukaryota</taxon>
        <taxon>Amoebozoa</taxon>
        <taxon>Evosea</taxon>
        <taxon>Eumycetozoa</taxon>
        <taxon>Dictyostelia</taxon>
        <taxon>Dictyosteliales</taxon>
        <taxon>Dictyosteliaceae</taxon>
        <taxon>Dictyostelium</taxon>
    </lineage>
</organism>
<feature type="chain" id="PRO_0000327415" description="Probable ATP-dependent RNA helicase ddx51">
    <location>
        <begin position="1"/>
        <end position="563"/>
    </location>
</feature>
<feature type="domain" description="Helicase ATP-binding" evidence="2">
    <location>
        <begin position="48"/>
        <end position="276"/>
    </location>
</feature>
<feature type="domain" description="Helicase C-terminal" evidence="3">
    <location>
        <begin position="308"/>
        <end position="482"/>
    </location>
</feature>
<feature type="region of interest" description="Disordered" evidence="4">
    <location>
        <begin position="493"/>
        <end position="537"/>
    </location>
</feature>
<feature type="short sequence motif" description="Q motif">
    <location>
        <begin position="15"/>
        <end position="43"/>
    </location>
</feature>
<feature type="short sequence motif" description="DEAD box">
    <location>
        <begin position="179"/>
        <end position="182"/>
    </location>
</feature>
<feature type="compositionally biased region" description="Acidic residues" evidence="4">
    <location>
        <begin position="495"/>
        <end position="510"/>
    </location>
</feature>
<feature type="compositionally biased region" description="Low complexity" evidence="4">
    <location>
        <begin position="520"/>
        <end position="536"/>
    </location>
</feature>
<feature type="binding site" evidence="2">
    <location>
        <begin position="61"/>
        <end position="68"/>
    </location>
    <ligand>
        <name>ATP</name>
        <dbReference type="ChEBI" id="CHEBI:30616"/>
    </ligand>
</feature>
<name>DDX51_DICDI</name>
<gene>
    <name type="primary">ddx51</name>
    <name type="ORF">DDB_G0293740</name>
</gene>
<comment type="function">
    <text evidence="1">Probable ATP-binding RNA helicase which may be involved in ribosome biogenesis.</text>
</comment>
<comment type="catalytic activity">
    <reaction>
        <text>ATP + H2O = ADP + phosphate + H(+)</text>
        <dbReference type="Rhea" id="RHEA:13065"/>
        <dbReference type="ChEBI" id="CHEBI:15377"/>
        <dbReference type="ChEBI" id="CHEBI:15378"/>
        <dbReference type="ChEBI" id="CHEBI:30616"/>
        <dbReference type="ChEBI" id="CHEBI:43474"/>
        <dbReference type="ChEBI" id="CHEBI:456216"/>
        <dbReference type="EC" id="3.6.4.13"/>
    </reaction>
</comment>
<comment type="subcellular location">
    <subcellularLocation>
        <location evidence="1">Nucleus</location>
        <location evidence="1">Nucleolus</location>
    </subcellularLocation>
</comment>
<comment type="domain">
    <text>The Q motif is unique to and characteristic of the DEAD box family of RNA helicases and controls ATP binding and hydrolysis.</text>
</comment>
<comment type="similarity">
    <text evidence="5">Belongs to the DEAD box helicase family. DDX51/DBP6 subfamily.</text>
</comment>
<proteinExistence type="inferred from homology"/>